<proteinExistence type="evidence at protein level"/>
<evidence type="ECO:0000255" key="1"/>
<evidence type="ECO:0000256" key="2">
    <source>
        <dbReference type="SAM" id="MobiDB-lite"/>
    </source>
</evidence>
<evidence type="ECO:0000269" key="3">
    <source>
    </source>
</evidence>
<evidence type="ECO:0000269" key="4">
    <source>
    </source>
</evidence>
<evidence type="ECO:0000305" key="5"/>
<organismHost>
    <name type="scientific">Mus musculus</name>
    <name type="common">Mouse</name>
    <dbReference type="NCBI Taxonomy" id="10090"/>
</organismHost>
<organism>
    <name type="scientific">Friend spleen focus-forming virus (isolate 502)</name>
    <name type="common">FSFFV</name>
    <dbReference type="NCBI Taxonomy" id="355329"/>
    <lineage>
        <taxon>Viruses</taxon>
        <taxon>Riboviria</taxon>
        <taxon>Pararnavirae</taxon>
        <taxon>Artverviricota</taxon>
        <taxon>Revtraviricetes</taxon>
        <taxon>Ortervirales</taxon>
        <taxon>Retroviridae</taxon>
        <taxon>Orthoretrovirinae</taxon>
        <taxon>Gammaretrovirus</taxon>
        <taxon>Spleen focus-forming virus</taxon>
    </lineage>
</organism>
<dbReference type="EMBL" id="K00021">
    <property type="protein sequence ID" value="AAA46487.1"/>
    <property type="molecule type" value="Genomic_RNA"/>
</dbReference>
<dbReference type="PIR" id="A03993">
    <property type="entry name" value="VCVW5S"/>
</dbReference>
<dbReference type="RefSeq" id="NP_041218.1">
    <property type="nucleotide sequence ID" value="NC_001500.1"/>
</dbReference>
<dbReference type="SMR" id="P03393"/>
<dbReference type="GlyConnect" id="128">
    <property type="glycosylation" value="2 N-Linked glycans"/>
</dbReference>
<dbReference type="GlyConnect" id="129">
    <property type="glycosylation" value="7 N-Linked glycans, 1 O-Linked glycan"/>
</dbReference>
<dbReference type="GlyConnect" id="130">
    <property type="glycosylation" value="4 N-Linked glycans, 1 O-Linked glycan"/>
</dbReference>
<dbReference type="GlyConnect" id="131">
    <property type="glycosylation" value="4 N-Linked glycans, 1 O-Linked glycan"/>
</dbReference>
<dbReference type="GlyConnect" id="132">
    <property type="glycosylation" value="4 N-Linked glycans"/>
</dbReference>
<dbReference type="GlyConnect" id="133">
    <property type="glycosylation" value="4 N-Linked glycans"/>
</dbReference>
<dbReference type="GlyConnect" id="134">
    <property type="glycosylation" value="2 N-Linked glycans, 3 O-Linked glycans"/>
</dbReference>
<dbReference type="GlyConnect" id="135">
    <property type="glycosylation" value="1 N-Linked glycan, 2 O-Linked glycans"/>
</dbReference>
<dbReference type="GlyConnect" id="136">
    <property type="glycosylation" value="1 N-Linked glycan, 2 O-Linked glycans"/>
</dbReference>
<dbReference type="GlyCosmos" id="P03393">
    <property type="glycosylation" value="4 sites, 22 glycans"/>
</dbReference>
<dbReference type="KEGG" id="vg:1491889"/>
<dbReference type="Proteomes" id="UP000201688">
    <property type="component" value="Segment"/>
</dbReference>
<dbReference type="GO" id="GO:0044167">
    <property type="term" value="C:host cell endoplasmic reticulum membrane"/>
    <property type="evidence" value="ECO:0007669"/>
    <property type="project" value="UniProtKB-SubCell"/>
</dbReference>
<dbReference type="GO" id="GO:0020002">
    <property type="term" value="C:host cell plasma membrane"/>
    <property type="evidence" value="ECO:0007669"/>
    <property type="project" value="UniProtKB-SubCell"/>
</dbReference>
<dbReference type="GO" id="GO:0016020">
    <property type="term" value="C:membrane"/>
    <property type="evidence" value="ECO:0007669"/>
    <property type="project" value="UniProtKB-KW"/>
</dbReference>
<dbReference type="GO" id="GO:0019031">
    <property type="term" value="C:viral envelope"/>
    <property type="evidence" value="ECO:0007669"/>
    <property type="project" value="UniProtKB-KW"/>
</dbReference>
<dbReference type="GO" id="GO:0055036">
    <property type="term" value="C:virion membrane"/>
    <property type="evidence" value="ECO:0007669"/>
    <property type="project" value="UniProtKB-SubCell"/>
</dbReference>
<dbReference type="GO" id="GO:0019064">
    <property type="term" value="P:fusion of virus membrane with host plasma membrane"/>
    <property type="evidence" value="ECO:0007669"/>
    <property type="project" value="UniProtKB-KW"/>
</dbReference>
<dbReference type="GO" id="GO:0046718">
    <property type="term" value="P:symbiont entry into host cell"/>
    <property type="evidence" value="ECO:0007669"/>
    <property type="project" value="UniProtKB-KW"/>
</dbReference>
<dbReference type="GO" id="GO:0019062">
    <property type="term" value="P:virion attachment to host cell"/>
    <property type="evidence" value="ECO:0007669"/>
    <property type="project" value="UniProtKB-KW"/>
</dbReference>
<dbReference type="Gene3D" id="1.10.287.210">
    <property type="match status" value="1"/>
</dbReference>
<dbReference type="Gene3D" id="3.90.310.10">
    <property type="entry name" value="ENV polyprotein, receptor-binding domain"/>
    <property type="match status" value="1"/>
</dbReference>
<dbReference type="InterPro" id="IPR008981">
    <property type="entry name" value="FMuLV_rcpt-bd"/>
</dbReference>
<dbReference type="InterPro" id="IPR018154">
    <property type="entry name" value="TLV/ENV_coat_polyprotein"/>
</dbReference>
<dbReference type="PANTHER" id="PTHR10424:SF72">
    <property type="entry name" value="BC035947 PROTEIN-RELATED"/>
    <property type="match status" value="1"/>
</dbReference>
<dbReference type="PANTHER" id="PTHR10424">
    <property type="entry name" value="VIRAL ENVELOPE PROTEIN"/>
    <property type="match status" value="1"/>
</dbReference>
<dbReference type="Pfam" id="PF00429">
    <property type="entry name" value="TLV_coat"/>
    <property type="match status" value="2"/>
</dbReference>
<dbReference type="SUPFAM" id="SSF49830">
    <property type="entry name" value="ENV polyprotein, receptor-binding domain"/>
    <property type="match status" value="1"/>
</dbReference>
<feature type="signal peptide" evidence="1">
    <location>
        <begin position="1"/>
        <end position="32"/>
    </location>
</feature>
<feature type="chain" id="PRO_0000040718" description="Glycoprotein 55">
    <location>
        <begin position="33"/>
        <end position="409"/>
    </location>
</feature>
<feature type="topological domain" description="Virion surface" evidence="1">
    <location>
        <begin position="33"/>
        <end position="384"/>
    </location>
</feature>
<feature type="transmembrane region" description="Helical" evidence="1">
    <location>
        <begin position="385"/>
        <end position="405"/>
    </location>
</feature>
<feature type="topological domain" description="Intravirion" evidence="1">
    <location>
        <begin position="406"/>
        <end position="409"/>
    </location>
</feature>
<feature type="region of interest" description="Disordered" evidence="2">
    <location>
        <begin position="254"/>
        <end position="280"/>
    </location>
</feature>
<feature type="glycosylation site" description="N-linked (GlcNAc...) asparagine; by host" evidence="1">
    <location>
        <position position="43"/>
    </location>
</feature>
<feature type="glycosylation site" description="N-linked (GlcNAc...) asparagine; by host" evidence="1">
    <location>
        <position position="58"/>
    </location>
</feature>
<feature type="glycosylation site" description="N-linked (GlcNAc...) asparagine; by host" evidence="1">
    <location>
        <position position="296"/>
    </location>
</feature>
<feature type="glycosylation site" description="N-linked (GlcNAc...) asparagine; by host" evidence="1">
    <location>
        <position position="328"/>
    </location>
</feature>
<keyword id="KW-1015">Disulfide bond</keyword>
<keyword id="KW-1169">Fusion of virus membrane with host cell membrane</keyword>
<keyword id="KW-1168">Fusion of virus membrane with host membrane</keyword>
<keyword id="KW-0325">Glycoprotein</keyword>
<keyword id="KW-1032">Host cell membrane</keyword>
<keyword id="KW-1038">Host endoplasmic reticulum</keyword>
<keyword id="KW-1043">Host membrane</keyword>
<keyword id="KW-0945">Host-virus interaction</keyword>
<keyword id="KW-0472">Membrane</keyword>
<keyword id="KW-0553">Oncogene</keyword>
<keyword id="KW-0732">Signal</keyword>
<keyword id="KW-0812">Transmembrane</keyword>
<keyword id="KW-1133">Transmembrane helix</keyword>
<keyword id="KW-1161">Viral attachment to host cell</keyword>
<keyword id="KW-0261">Viral envelope protein</keyword>
<keyword id="KW-1162">Viral penetration into host cytoplasm</keyword>
<keyword id="KW-0946">Virion</keyword>
<keyword id="KW-1160">Virus entry into host cell</keyword>
<gene>
    <name type="primary">env</name>
</gene>
<protein>
    <recommendedName>
        <fullName>Glycoprotein 55</fullName>
        <shortName>gp55</shortName>
    </recommendedName>
</protein>
<reference key="1">
    <citation type="journal article" date="1983" name="Proc. Natl. Acad. Sci. U.S.A.">
        <title>Complete nucleotide sequence of an infectious clone of Friend spleen focus-forming provirus: gp55 is an envelope fusion glycoprotein.</title>
        <authorList>
            <person name="Clark S.P."/>
            <person name="Mak T.W."/>
        </authorList>
    </citation>
    <scope>NUCLEOTIDE SEQUENCE [GENOMIC RNA]</scope>
</reference>
<reference key="2">
    <citation type="journal article" date="1990" name="J. Virol.">
        <title>A deletion in the Friend spleen focus-forming virus env gene is necessary for its product (gp55) to be leukemogenic.</title>
        <authorList>
            <person name="Watanabe N."/>
            <person name="Nishi M."/>
            <person name="Ikawa Y."/>
            <person name="Amanuma H."/>
        </authorList>
    </citation>
    <scope>CHARACTERIZATION</scope>
</reference>
<reference key="3">
    <citation type="journal article" date="1990" name="J. Virol.">
        <authorList>
            <person name="Watanabe N."/>
            <person name="Nishi M."/>
            <person name="Ikawa Y."/>
            <person name="Amanuma H."/>
        </authorList>
    </citation>
    <scope>ERRATUM OF PUBMED:2159537</scope>
</reference>
<reference key="4">
    <citation type="journal article" date="2000" name="Blood">
        <title>Friend erythroleukemia revisited.</title>
        <authorList>
            <person name="Ney P.A."/>
            <person name="D'Andrea A.D."/>
        </authorList>
    </citation>
    <scope>REVIEW</scope>
</reference>
<reference key="5">
    <citation type="journal article" date="2001" name="J. Virol.">
        <title>The envelope glycoprotein of friend spleen focus-forming virus covalently interacts with and constitutively activates a truncated form of the receptor tyrosine kinase Stk.</title>
        <authorList>
            <person name="Nishigaki K."/>
            <person name="Thompson D."/>
            <person name="Hanson C."/>
            <person name="Yugawa T."/>
            <person name="Ruscetti S."/>
        </authorList>
    </citation>
    <scope>FUNCTION</scope>
    <scope>INTERACTION WITH MOUSE MST1R ISOFORM SF-STK</scope>
</reference>
<reference key="6">
    <citation type="journal article" date="2003" name="J. Biol. Chem.">
        <title>The erythropoietin receptor transmembrane domain mediates complex formation with viral anemic and polycythemic gp55 proteins.</title>
        <authorList>
            <person name="Constantinescu S.N."/>
            <person name="Keren T."/>
            <person name="Russ W.P."/>
            <person name="Ubarretxena-Belandia I."/>
            <person name="Malka Y."/>
            <person name="Kubatzky K.F."/>
            <person name="Engelman D.M."/>
            <person name="Lodish H.F."/>
            <person name="Henis Y.I."/>
        </authorList>
    </citation>
    <scope>FUNCTION</scope>
    <scope>SUBUNIT</scope>
    <scope>INTERACTION WITH MOUSE EPOR</scope>
</reference>
<name>ENV_FRSF5</name>
<comment type="function">
    <text evidence="3 4">This envelope-like membrane glycoprotein is responsible for ligand-independent activation of the erythropoietin receptor EPOR leading to the abnormally rapid proliferation of erythroid precursor cells. In the first stage of Friend disease, constitutive activation of EPOR by gp55 causes uncontrolled, polyclonal proliferation of infected erythroblasts, leading to polycythemia (massive increase in the number of mature red cells). Host susceptibility to SSFV-induced erythroblastosis depends on the expression of the truncated isoform of MST1R receptor tyrosine kinase (MST1R isoform sf-Stk). Interaction with SSFV gp 55 results in constitutive tyrosine phosphorylation and activation of MST1R isoform sf-Stk.</text>
</comment>
<comment type="subunit">
    <text evidence="4 5">Homooligomer (Probable). Forms heterooligomers with mouse EPOR, probably via their respective transmembrane domains. Forms covalent heterodimers with mouse MST1R isoform sf-Stk, probably via disulfide bonds.</text>
</comment>
<comment type="subcellular location">
    <subcellularLocation>
        <location>Host endoplasmic reticulum membrane</location>
        <topology>Single-pass type I membrane protein</topology>
    </subcellularLocation>
    <subcellularLocation>
        <location>Host cell membrane</location>
        <topology>Single-pass type I membrane protein</topology>
    </subcellularLocation>
    <subcellularLocation>
        <location evidence="5">Virion membrane</location>
        <topology evidence="5">Single-pass type I membrane protein</topology>
    </subcellularLocation>
    <text>The envelope-like membrane glycoprotein gp55 is defective in its transport to the cell surface and remains associated predominantly with the rough endoplasmic reticulum (RER) membrane. It is almost not incorporated into virions. Host cell surface expression appears to be a prerequisite for its leukemogenicity.</text>
</comment>
<comment type="miscellaneous">
    <text>Compared to other gammaretroviruses which possess 2 envelope proteins (gp70 and p15E), gp55 corresponds to a gp70-p15E fusion protein with a deletion of a portion of p15E. It is encoded by the defective env gene of the virus.</text>
</comment>
<comment type="miscellaneous">
    <text>The Friend murine leukemia virus complex induces a rapid and fatal erythroleukemia in adult mice. It is the replication-defective spleen focus-forming virus (SFFV) contained in this complex that causes foci of proliferating erythroid cells in spleens of infected mice. The second component is a replication competent Friend murine leukemia virus (F-MuLV) that serves as a helper virus for SFFV.</text>
</comment>
<sequence length="409" mass="44777">MKGPAFSKPLKDKINPWGPLIVLGILIRAGVSVQHDSPHQVFNVTWRVTNLMTGQTANATSLLGTMTDAFPMLHFDLCDLIGDDWDETGLECRTPGGRKRARTFDFYVCPGHTVPTGCGGPREGYCGKWGCETTGQAYWKPSSSWDLISLKRGNTPKDRGPCYDSSVSSGVQGATPGGRCNPLVLKFTDAGKKASWDSPKVWGLRLYRPTGIDPVTRFSLTRQVLNIGPRIPIGPNPVIIGQLPPSRPVQVRLPRPPQPPPTGAASMVPGTAPPSQQPGTGDRLLNLVQGAYQALNLTNPDKTQECWLCLVSGPPYYEGVAVLGTNSNHTSALKEKCCFYADHTGLVRDSMAKLRKRLTQRQKLFESSQGWFEGSFNRSPWFTTLISTIMGLLIILLLLLILLLWTLHS</sequence>
<accession>P03393</accession>